<organism>
    <name type="scientific">Xenopus laevis</name>
    <name type="common">African clawed frog</name>
    <dbReference type="NCBI Taxonomy" id="8355"/>
    <lineage>
        <taxon>Eukaryota</taxon>
        <taxon>Metazoa</taxon>
        <taxon>Chordata</taxon>
        <taxon>Craniata</taxon>
        <taxon>Vertebrata</taxon>
        <taxon>Euteleostomi</taxon>
        <taxon>Amphibia</taxon>
        <taxon>Batrachia</taxon>
        <taxon>Anura</taxon>
        <taxon>Pipoidea</taxon>
        <taxon>Pipidae</taxon>
        <taxon>Xenopodinae</taxon>
        <taxon>Xenopus</taxon>
        <taxon>Xenopus</taxon>
    </lineage>
</organism>
<gene>
    <name evidence="1" type="primary">wtap</name>
</gene>
<reference key="1">
    <citation type="submission" date="2005-07" db="EMBL/GenBank/DDBJ databases">
        <authorList>
            <consortium name="NIH - Xenopus Gene Collection (XGC) project"/>
        </authorList>
    </citation>
    <scope>NUCLEOTIDE SEQUENCE [LARGE SCALE MRNA]</scope>
    <source>
        <tissue>Egg</tissue>
    </source>
</reference>
<sequence>MTNEEPLPKKVRLNESDFKVLPREDLLQRWKQYEAYVQALENKYTDLNSNDVTGLRESEEKLKQQQQESARRENILVMRLATKEQEMQECTNQIQHLKQVQQPSVAQLRATMVDPAINLFFIKMKAELEQTKDKLEQAQNELSAWKFTPDSQTGKKLMAKCRMLIQENQELGRQLSQGRIAQLEAELALQKKYSEELKSSQDELNDFIIQLDEEVEGMQSTILVLQQQLKDSRQQLSQFQQQIQISGNRTPSSEPKDEGETSGKDCGRILNGPSNGGSSLQRTHSSAGLYREGSSTEDDFSASPINEGKLSNHSQERTSRDGSSYINPLSTGYESVDSPTGSENSLTHQSNDTDSNHDSQEEKPVSGKGNRTVSSRHLQNGLDSSVNVQGSVL</sequence>
<protein>
    <recommendedName>
        <fullName evidence="3">Pre-mRNA-splicing regulator WTAP</fullName>
    </recommendedName>
    <alternativeName>
        <fullName evidence="1">Female-lethal(2)D homolog</fullName>
    </alternativeName>
    <alternativeName>
        <fullName evidence="1">WT1-associated protein</fullName>
    </alternativeName>
    <alternativeName>
        <fullName evidence="1">Wilms tumor 1-associating protein</fullName>
    </alternativeName>
</protein>
<name>FL2D_XENLA</name>
<dbReference type="EMBL" id="BC099007">
    <property type="protein sequence ID" value="AAH99007.1"/>
    <property type="molecule type" value="mRNA"/>
</dbReference>
<dbReference type="RefSeq" id="NP_001089582.1">
    <property type="nucleotide sequence ID" value="NM_001096113.1"/>
</dbReference>
<dbReference type="RefSeq" id="XP_018117590.1">
    <property type="nucleotide sequence ID" value="XM_018262101.1"/>
</dbReference>
<dbReference type="SMR" id="Q4KLT6"/>
<dbReference type="DNASU" id="734639"/>
<dbReference type="GeneID" id="734639"/>
<dbReference type="KEGG" id="xla:734639"/>
<dbReference type="AGR" id="Xenbase:XB-GENE-864912"/>
<dbReference type="CTD" id="734639"/>
<dbReference type="Xenbase" id="XB-GENE-864912">
    <property type="gene designation" value="wtap.L"/>
</dbReference>
<dbReference type="OMA" id="FRTITNQ"/>
<dbReference type="OrthoDB" id="3366661at2759"/>
<dbReference type="Proteomes" id="UP000186698">
    <property type="component" value="Chromosome 5L"/>
</dbReference>
<dbReference type="Bgee" id="734639">
    <property type="expression patterns" value="Expressed in blastula and 19 other cell types or tissues"/>
</dbReference>
<dbReference type="GO" id="GO:0005737">
    <property type="term" value="C:cytoplasm"/>
    <property type="evidence" value="ECO:0000250"/>
    <property type="project" value="UniProtKB"/>
</dbReference>
<dbReference type="GO" id="GO:0016607">
    <property type="term" value="C:nuclear speck"/>
    <property type="evidence" value="ECO:0000250"/>
    <property type="project" value="UniProtKB"/>
</dbReference>
<dbReference type="GO" id="GO:0005634">
    <property type="term" value="C:nucleus"/>
    <property type="evidence" value="ECO:0000250"/>
    <property type="project" value="UniProtKB"/>
</dbReference>
<dbReference type="GO" id="GO:0036396">
    <property type="term" value="C:RNA N6-methyladenosine methyltransferase complex"/>
    <property type="evidence" value="ECO:0000250"/>
    <property type="project" value="UniProtKB"/>
</dbReference>
<dbReference type="GO" id="GO:0016556">
    <property type="term" value="P:mRNA modification"/>
    <property type="evidence" value="ECO:0007669"/>
    <property type="project" value="InterPro"/>
</dbReference>
<dbReference type="GO" id="GO:0006397">
    <property type="term" value="P:mRNA processing"/>
    <property type="evidence" value="ECO:0000250"/>
    <property type="project" value="UniProtKB"/>
</dbReference>
<dbReference type="GO" id="GO:0000381">
    <property type="term" value="P:regulation of alternative mRNA splicing, via spliceosome"/>
    <property type="evidence" value="ECO:0000250"/>
    <property type="project" value="UniProtKB"/>
</dbReference>
<dbReference type="GO" id="GO:0008380">
    <property type="term" value="P:RNA splicing"/>
    <property type="evidence" value="ECO:0007669"/>
    <property type="project" value="UniProtKB-KW"/>
</dbReference>
<dbReference type="InterPro" id="IPR033757">
    <property type="entry name" value="WTAP"/>
</dbReference>
<dbReference type="PANTHER" id="PTHR15217:SF0">
    <property type="entry name" value="PRE-MRNA-SPLICING REGULATOR WTAP"/>
    <property type="match status" value="1"/>
</dbReference>
<dbReference type="PANTHER" id="PTHR15217">
    <property type="entry name" value="WILMS' TUMOR 1-ASSOCIATING PROTEIN"/>
    <property type="match status" value="1"/>
</dbReference>
<dbReference type="Pfam" id="PF17098">
    <property type="entry name" value="Wtap"/>
    <property type="match status" value="1"/>
</dbReference>
<accession>Q4KLT6</accession>
<comment type="function">
    <text evidence="1">Associated component of the WMM complex, a complex that mediates N6-methyladenosine (m6A) methylation of RNAs, a modification that plays a role in the efficiency of mRNA splicing and RNA processing.</text>
</comment>
<comment type="subunit">
    <text evidence="1">Component of the WMM complex, a N6-methyltransferase complex composed of a catalytic subcomplex, named MAC, and of an associated subcomplex, named MACOM. Component of the MACOM subcomplex.</text>
</comment>
<comment type="subcellular location">
    <subcellularLocation>
        <location evidence="1">Nucleus speckle</location>
    </subcellularLocation>
    <subcellularLocation>
        <location evidence="1">Nucleus</location>
        <location evidence="1">Nucleoplasm</location>
    </subcellularLocation>
</comment>
<comment type="similarity">
    <text evidence="3">Belongs to the fl(2)d family.</text>
</comment>
<proteinExistence type="evidence at transcript level"/>
<feature type="chain" id="PRO_0000308628" description="Pre-mRNA-splicing regulator WTAP">
    <location>
        <begin position="1"/>
        <end position="393"/>
    </location>
</feature>
<feature type="region of interest" description="Disordered" evidence="2">
    <location>
        <begin position="242"/>
        <end position="393"/>
    </location>
</feature>
<feature type="compositionally biased region" description="Basic and acidic residues" evidence="2">
    <location>
        <begin position="254"/>
        <end position="267"/>
    </location>
</feature>
<feature type="compositionally biased region" description="Polar residues" evidence="2">
    <location>
        <begin position="272"/>
        <end position="286"/>
    </location>
</feature>
<feature type="compositionally biased region" description="Polar residues" evidence="2">
    <location>
        <begin position="321"/>
        <end position="353"/>
    </location>
</feature>
<feature type="compositionally biased region" description="Basic and acidic residues" evidence="2">
    <location>
        <begin position="354"/>
        <end position="365"/>
    </location>
</feature>
<feature type="compositionally biased region" description="Polar residues" evidence="2">
    <location>
        <begin position="369"/>
        <end position="393"/>
    </location>
</feature>
<keyword id="KW-0131">Cell cycle</keyword>
<keyword id="KW-0217">Developmental protein</keyword>
<keyword id="KW-0507">mRNA processing</keyword>
<keyword id="KW-0508">mRNA splicing</keyword>
<keyword id="KW-0539">Nucleus</keyword>
<keyword id="KW-1185">Reference proteome</keyword>
<evidence type="ECO:0000250" key="1">
    <source>
        <dbReference type="UniProtKB" id="Q15007"/>
    </source>
</evidence>
<evidence type="ECO:0000256" key="2">
    <source>
        <dbReference type="SAM" id="MobiDB-lite"/>
    </source>
</evidence>
<evidence type="ECO:0000305" key="3"/>